<sequence length="391" mass="45314">MGEENQPNYTISQENWSLHRKGYDDQQRHQEKVQEAIKNNLPDLVTEESIVMSNGKDVVKIPIRSLDEYKIRYNYDKNKHVGQGNGDSKVGDVVARDGSGGQKQKGPGKGQGAGDAAGEDYYEAEVSILELEQAFFKELELPNLKRKEMDENRIEHVEFNDIRKTGLWGNIDKKRTMISAYKRNAMRGKASFHPIHQEDLKFRTWNEVLKPDSKAVVLAMMDTSGSMGIWEKYMARSFFFWMTRFLRTKYETVDIEFIAHHTEAKVVPEEEFFSKGESGGTICSSVYKKALELIDNKYSPDRYNIYPFHFSDGDNLTSDNARCVKLVEELMKKCNMFGYGEVNQYNRHSTLMSAYKNIKDENFRYYILKQKADVFHAMKSFFREESGEKMA</sequence>
<dbReference type="EMBL" id="CP000001">
    <property type="protein sequence ID" value="AAU19782.1"/>
    <property type="molecule type" value="Genomic_DNA"/>
</dbReference>
<dbReference type="SMR" id="Q63G97"/>
<dbReference type="KEGG" id="bcz:BCE33L0458"/>
<dbReference type="PATRIC" id="fig|288681.22.peg.5139"/>
<dbReference type="Proteomes" id="UP000002612">
    <property type="component" value="Chromosome"/>
</dbReference>
<dbReference type="HAMAP" id="MF_01232">
    <property type="entry name" value="UPF0229"/>
    <property type="match status" value="1"/>
</dbReference>
<dbReference type="InterPro" id="IPR014230">
    <property type="entry name" value="Spore_YhbH"/>
</dbReference>
<dbReference type="InterPro" id="IPR006698">
    <property type="entry name" value="UPF0229"/>
</dbReference>
<dbReference type="NCBIfam" id="TIGR02877">
    <property type="entry name" value="spore_yhbH"/>
    <property type="match status" value="1"/>
</dbReference>
<dbReference type="PANTHER" id="PTHR30510">
    <property type="entry name" value="UPF0229 PROTEIN YEAH"/>
    <property type="match status" value="1"/>
</dbReference>
<dbReference type="PANTHER" id="PTHR30510:SF2">
    <property type="entry name" value="UPF0229 PROTEIN YEAH"/>
    <property type="match status" value="1"/>
</dbReference>
<dbReference type="Pfam" id="PF04285">
    <property type="entry name" value="DUF444"/>
    <property type="match status" value="2"/>
</dbReference>
<accession>Q63G97</accession>
<comment type="similarity">
    <text evidence="1">Belongs to the UPF0229 family.</text>
</comment>
<organism>
    <name type="scientific">Bacillus cereus (strain ZK / E33L)</name>
    <dbReference type="NCBI Taxonomy" id="288681"/>
    <lineage>
        <taxon>Bacteria</taxon>
        <taxon>Bacillati</taxon>
        <taxon>Bacillota</taxon>
        <taxon>Bacilli</taxon>
        <taxon>Bacillales</taxon>
        <taxon>Bacillaceae</taxon>
        <taxon>Bacillus</taxon>
        <taxon>Bacillus cereus group</taxon>
    </lineage>
</organism>
<feature type="chain" id="PRO_1000066848" description="UPF0229 protein BCE33L0458">
    <location>
        <begin position="1"/>
        <end position="391"/>
    </location>
</feature>
<feature type="region of interest" description="Disordered" evidence="2">
    <location>
        <begin position="1"/>
        <end position="31"/>
    </location>
</feature>
<feature type="region of interest" description="Disordered" evidence="2">
    <location>
        <begin position="80"/>
        <end position="117"/>
    </location>
</feature>
<feature type="compositionally biased region" description="Polar residues" evidence="2">
    <location>
        <begin position="1"/>
        <end position="16"/>
    </location>
</feature>
<feature type="compositionally biased region" description="Basic and acidic residues" evidence="2">
    <location>
        <begin position="21"/>
        <end position="31"/>
    </location>
</feature>
<feature type="compositionally biased region" description="Gly residues" evidence="2">
    <location>
        <begin position="98"/>
        <end position="115"/>
    </location>
</feature>
<evidence type="ECO:0000255" key="1">
    <source>
        <dbReference type="HAMAP-Rule" id="MF_01232"/>
    </source>
</evidence>
<evidence type="ECO:0000256" key="2">
    <source>
        <dbReference type="SAM" id="MobiDB-lite"/>
    </source>
</evidence>
<reference key="1">
    <citation type="journal article" date="2006" name="J. Bacteriol.">
        <title>Pathogenomic sequence analysis of Bacillus cereus and Bacillus thuringiensis isolates closely related to Bacillus anthracis.</title>
        <authorList>
            <person name="Han C.S."/>
            <person name="Xie G."/>
            <person name="Challacombe J.F."/>
            <person name="Altherr M.R."/>
            <person name="Bhotika S.S."/>
            <person name="Bruce D."/>
            <person name="Campbell C.S."/>
            <person name="Campbell M.L."/>
            <person name="Chen J."/>
            <person name="Chertkov O."/>
            <person name="Cleland C."/>
            <person name="Dimitrijevic M."/>
            <person name="Doggett N.A."/>
            <person name="Fawcett J.J."/>
            <person name="Glavina T."/>
            <person name="Goodwin L.A."/>
            <person name="Hill K.K."/>
            <person name="Hitchcock P."/>
            <person name="Jackson P.J."/>
            <person name="Keim P."/>
            <person name="Kewalramani A.R."/>
            <person name="Longmire J."/>
            <person name="Lucas S."/>
            <person name="Malfatti S."/>
            <person name="McMurry K."/>
            <person name="Meincke L.J."/>
            <person name="Misra M."/>
            <person name="Moseman B.L."/>
            <person name="Mundt M."/>
            <person name="Munk A.C."/>
            <person name="Okinaka R.T."/>
            <person name="Parson-Quintana B."/>
            <person name="Reilly L.P."/>
            <person name="Richardson P."/>
            <person name="Robinson D.L."/>
            <person name="Rubin E."/>
            <person name="Saunders E."/>
            <person name="Tapia R."/>
            <person name="Tesmer J.G."/>
            <person name="Thayer N."/>
            <person name="Thompson L.S."/>
            <person name="Tice H."/>
            <person name="Ticknor L.O."/>
            <person name="Wills P.L."/>
            <person name="Brettin T.S."/>
            <person name="Gilna P."/>
        </authorList>
    </citation>
    <scope>NUCLEOTIDE SEQUENCE [LARGE SCALE GENOMIC DNA]</scope>
    <source>
        <strain>ZK / E33L</strain>
    </source>
</reference>
<proteinExistence type="inferred from homology"/>
<gene>
    <name type="ordered locus">BCE33L0458</name>
</gene>
<name>Y458_BACCZ</name>
<protein>
    <recommendedName>
        <fullName evidence="1">UPF0229 protein BCE33L0458</fullName>
    </recommendedName>
</protein>